<gene>
    <name evidence="1" type="primary">miaB</name>
    <name type="ordered locus">KPN78578_06750</name>
    <name type="ORF">KPN_00686</name>
</gene>
<accession>A6T6B5</accession>
<organism>
    <name type="scientific">Klebsiella pneumoniae subsp. pneumoniae (strain ATCC 700721 / MGH 78578)</name>
    <dbReference type="NCBI Taxonomy" id="272620"/>
    <lineage>
        <taxon>Bacteria</taxon>
        <taxon>Pseudomonadati</taxon>
        <taxon>Pseudomonadota</taxon>
        <taxon>Gammaproteobacteria</taxon>
        <taxon>Enterobacterales</taxon>
        <taxon>Enterobacteriaceae</taxon>
        <taxon>Klebsiella/Raoultella group</taxon>
        <taxon>Klebsiella</taxon>
        <taxon>Klebsiella pneumoniae complex</taxon>
    </lineage>
</organism>
<keyword id="KW-0004">4Fe-4S</keyword>
<keyword id="KW-0963">Cytoplasm</keyword>
<keyword id="KW-0408">Iron</keyword>
<keyword id="KW-0411">Iron-sulfur</keyword>
<keyword id="KW-0479">Metal-binding</keyword>
<keyword id="KW-0949">S-adenosyl-L-methionine</keyword>
<keyword id="KW-0808">Transferase</keyword>
<keyword id="KW-0819">tRNA processing</keyword>
<evidence type="ECO:0000255" key="1">
    <source>
        <dbReference type="HAMAP-Rule" id="MF_01864"/>
    </source>
</evidence>
<evidence type="ECO:0000255" key="2">
    <source>
        <dbReference type="PROSITE-ProRule" id="PRU01266"/>
    </source>
</evidence>
<evidence type="ECO:0000305" key="3"/>
<protein>
    <recommendedName>
        <fullName evidence="1">tRNA-2-methylthio-N(6)-dimethylallyladenosine synthase</fullName>
        <ecNumber evidence="1">2.8.4.3</ecNumber>
    </recommendedName>
    <alternativeName>
        <fullName evidence="1">(Dimethylallyl)adenosine tRNA methylthiotransferase MiaB</fullName>
    </alternativeName>
    <alternativeName>
        <fullName evidence="1">tRNA-i(6)A37 methylthiotransferase</fullName>
    </alternativeName>
</protein>
<dbReference type="EC" id="2.8.4.3" evidence="1"/>
<dbReference type="EMBL" id="CP000647">
    <property type="protein sequence ID" value="ABR76136.1"/>
    <property type="status" value="ALT_INIT"/>
    <property type="molecule type" value="Genomic_DNA"/>
</dbReference>
<dbReference type="RefSeq" id="WP_002894730.1">
    <property type="nucleotide sequence ID" value="NC_009648.1"/>
</dbReference>
<dbReference type="SMR" id="A6T6B5"/>
<dbReference type="STRING" id="272620.KPN_00686"/>
<dbReference type="jPOST" id="A6T6B5"/>
<dbReference type="PaxDb" id="272620-KPN_00686"/>
<dbReference type="EnsemblBacteria" id="ABR76136">
    <property type="protein sequence ID" value="ABR76136"/>
    <property type="gene ID" value="KPN_00686"/>
</dbReference>
<dbReference type="KEGG" id="kpn:KPN_00686"/>
<dbReference type="HOGENOM" id="CLU_018697_2_0_6"/>
<dbReference type="Proteomes" id="UP000000265">
    <property type="component" value="Chromosome"/>
</dbReference>
<dbReference type="GO" id="GO:0005829">
    <property type="term" value="C:cytosol"/>
    <property type="evidence" value="ECO:0007669"/>
    <property type="project" value="TreeGrafter"/>
</dbReference>
<dbReference type="GO" id="GO:0051539">
    <property type="term" value="F:4 iron, 4 sulfur cluster binding"/>
    <property type="evidence" value="ECO:0007669"/>
    <property type="project" value="UniProtKB-UniRule"/>
</dbReference>
<dbReference type="GO" id="GO:0046872">
    <property type="term" value="F:metal ion binding"/>
    <property type="evidence" value="ECO:0007669"/>
    <property type="project" value="UniProtKB-KW"/>
</dbReference>
<dbReference type="GO" id="GO:0035597">
    <property type="term" value="F:N6-isopentenyladenosine methylthiotransferase activity"/>
    <property type="evidence" value="ECO:0007669"/>
    <property type="project" value="TreeGrafter"/>
</dbReference>
<dbReference type="CDD" id="cd01335">
    <property type="entry name" value="Radical_SAM"/>
    <property type="match status" value="1"/>
</dbReference>
<dbReference type="FunFam" id="3.40.50.12160:FF:000001">
    <property type="entry name" value="tRNA-2-methylthio-N(6)-dimethylallyladenosine synthase"/>
    <property type="match status" value="1"/>
</dbReference>
<dbReference type="FunFam" id="3.80.30.20:FF:000001">
    <property type="entry name" value="tRNA-2-methylthio-N(6)-dimethylallyladenosine synthase 2"/>
    <property type="match status" value="1"/>
</dbReference>
<dbReference type="Gene3D" id="3.40.50.12160">
    <property type="entry name" value="Methylthiotransferase, N-terminal domain"/>
    <property type="match status" value="1"/>
</dbReference>
<dbReference type="Gene3D" id="3.80.30.20">
    <property type="entry name" value="tm_1862 like domain"/>
    <property type="match status" value="1"/>
</dbReference>
<dbReference type="HAMAP" id="MF_01864">
    <property type="entry name" value="tRNA_metthiotr_MiaB"/>
    <property type="match status" value="1"/>
</dbReference>
<dbReference type="InterPro" id="IPR006638">
    <property type="entry name" value="Elp3/MiaA/NifB-like_rSAM"/>
</dbReference>
<dbReference type="InterPro" id="IPR005839">
    <property type="entry name" value="Methylthiotransferase"/>
</dbReference>
<dbReference type="InterPro" id="IPR020612">
    <property type="entry name" value="Methylthiotransferase_CS"/>
</dbReference>
<dbReference type="InterPro" id="IPR013848">
    <property type="entry name" value="Methylthiotransferase_N"/>
</dbReference>
<dbReference type="InterPro" id="IPR038135">
    <property type="entry name" value="Methylthiotransferase_N_sf"/>
</dbReference>
<dbReference type="InterPro" id="IPR006463">
    <property type="entry name" value="MiaB_methiolase"/>
</dbReference>
<dbReference type="InterPro" id="IPR007197">
    <property type="entry name" value="rSAM"/>
</dbReference>
<dbReference type="InterPro" id="IPR023404">
    <property type="entry name" value="rSAM_horseshoe"/>
</dbReference>
<dbReference type="InterPro" id="IPR002792">
    <property type="entry name" value="TRAM_dom"/>
</dbReference>
<dbReference type="NCBIfam" id="TIGR01574">
    <property type="entry name" value="miaB-methiolase"/>
    <property type="match status" value="1"/>
</dbReference>
<dbReference type="NCBIfam" id="TIGR00089">
    <property type="entry name" value="MiaB/RimO family radical SAM methylthiotransferase"/>
    <property type="match status" value="1"/>
</dbReference>
<dbReference type="PANTHER" id="PTHR43020">
    <property type="entry name" value="CDK5 REGULATORY SUBUNIT-ASSOCIATED PROTEIN 1"/>
    <property type="match status" value="1"/>
</dbReference>
<dbReference type="PANTHER" id="PTHR43020:SF2">
    <property type="entry name" value="MITOCHONDRIAL TRNA METHYLTHIOTRANSFERASE CDK5RAP1"/>
    <property type="match status" value="1"/>
</dbReference>
<dbReference type="Pfam" id="PF04055">
    <property type="entry name" value="Radical_SAM"/>
    <property type="match status" value="1"/>
</dbReference>
<dbReference type="Pfam" id="PF01938">
    <property type="entry name" value="TRAM"/>
    <property type="match status" value="1"/>
</dbReference>
<dbReference type="Pfam" id="PF00919">
    <property type="entry name" value="UPF0004"/>
    <property type="match status" value="1"/>
</dbReference>
<dbReference type="SFLD" id="SFLDF00273">
    <property type="entry name" value="(dimethylallyl)adenosine_tRNA"/>
    <property type="match status" value="1"/>
</dbReference>
<dbReference type="SFLD" id="SFLDG01082">
    <property type="entry name" value="B12-binding_domain_containing"/>
    <property type="match status" value="1"/>
</dbReference>
<dbReference type="SFLD" id="SFLDG01061">
    <property type="entry name" value="methylthiotransferase"/>
    <property type="match status" value="1"/>
</dbReference>
<dbReference type="SMART" id="SM00729">
    <property type="entry name" value="Elp3"/>
    <property type="match status" value="1"/>
</dbReference>
<dbReference type="SUPFAM" id="SSF102114">
    <property type="entry name" value="Radical SAM enzymes"/>
    <property type="match status" value="1"/>
</dbReference>
<dbReference type="PROSITE" id="PS51449">
    <property type="entry name" value="MTTASE_N"/>
    <property type="match status" value="1"/>
</dbReference>
<dbReference type="PROSITE" id="PS01278">
    <property type="entry name" value="MTTASE_RADICAL"/>
    <property type="match status" value="1"/>
</dbReference>
<dbReference type="PROSITE" id="PS51918">
    <property type="entry name" value="RADICAL_SAM"/>
    <property type="match status" value="1"/>
</dbReference>
<dbReference type="PROSITE" id="PS50926">
    <property type="entry name" value="TRAM"/>
    <property type="match status" value="1"/>
</dbReference>
<comment type="function">
    <text evidence="1">Catalyzes the methylthiolation of N6-(dimethylallyl)adenosine (i(6)A), leading to the formation of 2-methylthio-N6-(dimethylallyl)adenosine (ms(2)i(6)A) at position 37 in tRNAs that read codons beginning with uridine.</text>
</comment>
<comment type="catalytic activity">
    <reaction evidence="1">
        <text>N(6)-dimethylallyladenosine(37) in tRNA + (sulfur carrier)-SH + AH2 + 2 S-adenosyl-L-methionine = 2-methylsulfanyl-N(6)-dimethylallyladenosine(37) in tRNA + (sulfur carrier)-H + 5'-deoxyadenosine + L-methionine + A + S-adenosyl-L-homocysteine + 2 H(+)</text>
        <dbReference type="Rhea" id="RHEA:37067"/>
        <dbReference type="Rhea" id="RHEA-COMP:10375"/>
        <dbReference type="Rhea" id="RHEA-COMP:10376"/>
        <dbReference type="Rhea" id="RHEA-COMP:14737"/>
        <dbReference type="Rhea" id="RHEA-COMP:14739"/>
        <dbReference type="ChEBI" id="CHEBI:13193"/>
        <dbReference type="ChEBI" id="CHEBI:15378"/>
        <dbReference type="ChEBI" id="CHEBI:17319"/>
        <dbReference type="ChEBI" id="CHEBI:17499"/>
        <dbReference type="ChEBI" id="CHEBI:29917"/>
        <dbReference type="ChEBI" id="CHEBI:57844"/>
        <dbReference type="ChEBI" id="CHEBI:57856"/>
        <dbReference type="ChEBI" id="CHEBI:59789"/>
        <dbReference type="ChEBI" id="CHEBI:64428"/>
        <dbReference type="ChEBI" id="CHEBI:74415"/>
        <dbReference type="ChEBI" id="CHEBI:74417"/>
        <dbReference type="EC" id="2.8.4.3"/>
    </reaction>
</comment>
<comment type="cofactor">
    <cofactor evidence="1">
        <name>[4Fe-4S] cluster</name>
        <dbReference type="ChEBI" id="CHEBI:49883"/>
    </cofactor>
    <text evidence="1">Binds 2 [4Fe-4S] clusters. One cluster is coordinated with 3 cysteines and an exchangeable S-adenosyl-L-methionine.</text>
</comment>
<comment type="subunit">
    <text evidence="1">Monomer.</text>
</comment>
<comment type="subcellular location">
    <subcellularLocation>
        <location evidence="1">Cytoplasm</location>
    </subcellularLocation>
</comment>
<comment type="similarity">
    <text evidence="1">Belongs to the methylthiotransferase family. MiaB subfamily.</text>
</comment>
<comment type="sequence caution" evidence="3">
    <conflict type="erroneous initiation">
        <sequence resource="EMBL-CDS" id="ABR76136"/>
    </conflict>
</comment>
<feature type="chain" id="PRO_0000374350" description="tRNA-2-methylthio-N(6)-dimethylallyladenosine synthase">
    <location>
        <begin position="1"/>
        <end position="474"/>
    </location>
</feature>
<feature type="domain" description="MTTase N-terminal" evidence="1">
    <location>
        <begin position="3"/>
        <end position="120"/>
    </location>
</feature>
<feature type="domain" description="Radical SAM core" evidence="2">
    <location>
        <begin position="143"/>
        <end position="375"/>
    </location>
</feature>
<feature type="domain" description="TRAM" evidence="1">
    <location>
        <begin position="378"/>
        <end position="441"/>
    </location>
</feature>
<feature type="binding site" evidence="1">
    <location>
        <position position="12"/>
    </location>
    <ligand>
        <name>[4Fe-4S] cluster</name>
        <dbReference type="ChEBI" id="CHEBI:49883"/>
        <label>1</label>
    </ligand>
</feature>
<feature type="binding site" evidence="1">
    <location>
        <position position="49"/>
    </location>
    <ligand>
        <name>[4Fe-4S] cluster</name>
        <dbReference type="ChEBI" id="CHEBI:49883"/>
        <label>1</label>
    </ligand>
</feature>
<feature type="binding site" evidence="1">
    <location>
        <position position="83"/>
    </location>
    <ligand>
        <name>[4Fe-4S] cluster</name>
        <dbReference type="ChEBI" id="CHEBI:49883"/>
        <label>1</label>
    </ligand>
</feature>
<feature type="binding site" evidence="1">
    <location>
        <position position="157"/>
    </location>
    <ligand>
        <name>[4Fe-4S] cluster</name>
        <dbReference type="ChEBI" id="CHEBI:49883"/>
        <label>2</label>
        <note>4Fe-4S-S-AdoMet</note>
    </ligand>
</feature>
<feature type="binding site" evidence="1">
    <location>
        <position position="161"/>
    </location>
    <ligand>
        <name>[4Fe-4S] cluster</name>
        <dbReference type="ChEBI" id="CHEBI:49883"/>
        <label>2</label>
        <note>4Fe-4S-S-AdoMet</note>
    </ligand>
</feature>
<feature type="binding site" evidence="1">
    <location>
        <position position="164"/>
    </location>
    <ligand>
        <name>[4Fe-4S] cluster</name>
        <dbReference type="ChEBI" id="CHEBI:49883"/>
        <label>2</label>
        <note>4Fe-4S-S-AdoMet</note>
    </ligand>
</feature>
<sequence>MTKKLHIKTWGCQMNEYDSSKMADLLDATHGYQLTEVAEEADVLLLNTCSIREKAQEKVFHQLGRWKLLKEKNPDLIIGVGGCVASQEGDHIRQRAHYVDIIFGPQTLHRLPEMINSVRGNRSPVVDISFPEIEKFDRLPEPRAEGPTAFVSIMEGCNKYCTYCVVPYTRGEEVSRPCDDILFEIAQLAAQGVREVNLLGQNVNAWRGENYDGTTGSFADLLRLVAAIDGIDRIRFTTSHPIEFTDDIIDVYRDTPELVSFLHLPVQSGSDRVLNLMGRTHTALEYKAIIRKLREARPDIQISSDFIVGFPGETTEDFEKTMKLIADVNFDMSYSFIFSARPGTPAADMVDDVPEADKKQRLYILQERINQQAMAWSRRMLGTVQRILVEGTSRKNIMELSGRTENNRVVNFEGTPDLVGKFVDVEIVDVYTNSLRGKIVRTEAEMGLRIAESPESVIARTRKENDLGVGIYQP</sequence>
<proteinExistence type="inferred from homology"/>
<reference key="1">
    <citation type="submission" date="2006-09" db="EMBL/GenBank/DDBJ databases">
        <authorList>
            <consortium name="The Klebsiella pneumonia Genome Sequencing Project"/>
            <person name="McClelland M."/>
            <person name="Sanderson E.K."/>
            <person name="Spieth J."/>
            <person name="Clifton W.S."/>
            <person name="Latreille P."/>
            <person name="Sabo A."/>
            <person name="Pepin K."/>
            <person name="Bhonagiri V."/>
            <person name="Porwollik S."/>
            <person name="Ali J."/>
            <person name="Wilson R.K."/>
        </authorList>
    </citation>
    <scope>NUCLEOTIDE SEQUENCE [LARGE SCALE GENOMIC DNA]</scope>
    <source>
        <strain>ATCC 700721 / MGH 78578</strain>
    </source>
</reference>
<name>MIAB_KLEP7</name>